<organism>
    <name type="scientific">Bos taurus</name>
    <name type="common">Bovine</name>
    <dbReference type="NCBI Taxonomy" id="9913"/>
    <lineage>
        <taxon>Eukaryota</taxon>
        <taxon>Metazoa</taxon>
        <taxon>Chordata</taxon>
        <taxon>Craniata</taxon>
        <taxon>Vertebrata</taxon>
        <taxon>Euteleostomi</taxon>
        <taxon>Mammalia</taxon>
        <taxon>Eutheria</taxon>
        <taxon>Laurasiatheria</taxon>
        <taxon>Artiodactyla</taxon>
        <taxon>Ruminantia</taxon>
        <taxon>Pecora</taxon>
        <taxon>Bovidae</taxon>
        <taxon>Bovinae</taxon>
        <taxon>Bos</taxon>
    </lineage>
</organism>
<feature type="chain" id="PRO_0000342360" description="Rho guanine nucleotide exchange factor 10-like protein">
    <location>
        <begin position="1"/>
        <end position="1237"/>
    </location>
</feature>
<feature type="domain" description="DH" evidence="4">
    <location>
        <begin position="276"/>
        <end position="463"/>
    </location>
</feature>
<feature type="region of interest" description="Disordered" evidence="5">
    <location>
        <begin position="1"/>
        <end position="117"/>
    </location>
</feature>
<feature type="region of interest" description="Disordered" evidence="5">
    <location>
        <begin position="132"/>
        <end position="203"/>
    </location>
</feature>
<feature type="region of interest" description="Disordered" evidence="5">
    <location>
        <begin position="1091"/>
        <end position="1118"/>
    </location>
</feature>
<feature type="region of interest" description="Disordered" evidence="5">
    <location>
        <begin position="1142"/>
        <end position="1164"/>
    </location>
</feature>
<feature type="compositionally biased region" description="Acidic residues" evidence="5">
    <location>
        <begin position="25"/>
        <end position="45"/>
    </location>
</feature>
<feature type="compositionally biased region" description="Basic and acidic residues" evidence="5">
    <location>
        <begin position="146"/>
        <end position="163"/>
    </location>
</feature>
<feature type="compositionally biased region" description="Basic and acidic residues" evidence="5">
    <location>
        <begin position="184"/>
        <end position="194"/>
    </location>
</feature>
<feature type="modified residue" description="Phosphoserine" evidence="3">
    <location>
        <position position="39"/>
    </location>
</feature>
<feature type="modified residue" description="Phosphotyrosine" evidence="2">
    <location>
        <position position="132"/>
    </location>
</feature>
<feature type="modified residue" description="Phosphotyrosine" evidence="2">
    <location>
        <position position="153"/>
    </location>
</feature>
<feature type="modified residue" description="Phosphoserine" evidence="3">
    <location>
        <position position="241"/>
    </location>
</feature>
<comment type="function">
    <text evidence="1">Acts as a guanine nucleotide exchange factor (GEF) for RHOA, RHOB and RHOC.</text>
</comment>
<comment type="subunit">
    <text evidence="1">Interacts with RHOA, RHOB and RHOC.</text>
</comment>
<comment type="subcellular location">
    <subcellularLocation>
        <location evidence="1">Cytoplasm</location>
    </subcellularLocation>
</comment>
<sequence length="1237" mass="135085">MASSSPLQAAAGDRLLPGGPGPSPEAEDDPGEGFEFDDSDDDEDTNAGPDVPRSALETEADTPLIHLDSAPVIDLEPKPEPAQPQTQRPAAVSNGDAVDAAFSEVQRSGWRRKSSRRIERFTFPAVEEDVIYDDVPCENLDAQQPEAERNQPYEDARQDRAPQEPEDLGWSSSEFESYSEDSGEEAKPEAEPTKHRVSFQPKMTQLMKAAKSGTKDGLEKTRIAVMRKVSFLHRKDVLGDSEEEDMGLLEVSVSDIKPPAPELGPMPAGLTPQQVVRRHILGSIVQSEGSYVDSLKRVLQDYRNPLMEMEPKALSARKCRAVFFRVKEILHCHSMFQIALSSRVAEWDSTEKIGDLFVASFSKSMVLDVYSDYVNNFTNAMSIIKKACLTKPAFLEFLKRRQVCSPDRVTLYGLMVKPIQRFPQFILLLQDMLKNTPRGHPDRLSLQLALTELETLAEKLNEQKRLADQVAEIQQLTKSVSDRSSLNKLLTSGQRQLLLCETLTETVYGDRGQLIKSKERRVFLLNDMLVCANINFKGQLEISSLAPLGPKYVVKWSTALPQVQVVEVGQEGGPYDKDNALIQHAGAKKASAAGQAQNKVYLGPPRLFQELQDLQKDLAVVEQITLLVSTLHGTYQNLNMTVAQDWCLALQRLMRVKEEEIHSANKCRLRLLLPGKPDKSGRPISFMVVFITPNPLSKISWVNRLHLAKIGLREENQPGWLCPDEDKQSRAPFWCPILACCVPAFSFRGLSLQLGALVHSPVSCPLLGFSAVSTSLPQGYLWVGGGQEGAGGQVEIFSLNRPSPRTVKSFPLAAPVLCMEYIPEPEEGDGRNGDKGCPAADASAGVHPTICLGLQDGSILLYSSVDTGTQCLAACRSPGLQPVLCLRHSPFHLLAGLQDGTLAAYPRTSGSVPWDLESPPMCLPVGPGPVRALLSLEEAVWASCGPRVTVLDATSLQTQQSFEAHQDEAVSVTHMVKAGSGVWMAFSSGSSIRLFHTETLEHLQEINIATRTTFLLPGQKHLCVTSLLICQGLLWVGTDQGVIVLLPVPRLEGIPKITGKGMVSLNGHCGPVAFLAVATSILAPDILRSDQEEAEGQQAEEDKPDGPAPEPAPVPASHVGGELIRKKGILLQYRLRSTSHLPGPLLSVREPEPADGSALEHSEEDGSIYEMVDDPDVWVHNRPCARDAHRKEICSVAIISGGRGYRNFGSAAGSPGKPAPCGETDSTLLIWQAPLTL</sequence>
<gene>
    <name type="primary">ARHGEF10L</name>
    <name type="synonym">GRINCHGEF</name>
</gene>
<proteinExistence type="evidence at transcript level"/>
<reference key="1">
    <citation type="submission" date="2006-02" db="EMBL/GenBank/DDBJ databases">
        <authorList>
            <consortium name="NIH - Mammalian Gene Collection (MGC) project"/>
        </authorList>
    </citation>
    <scope>NUCLEOTIDE SEQUENCE [LARGE SCALE MRNA]</scope>
    <source>
        <strain>Hereford</strain>
        <tissue>Heart ventricle</tissue>
    </source>
</reference>
<protein>
    <recommendedName>
        <fullName>Rho guanine nucleotide exchange factor 10-like protein</fullName>
    </recommendedName>
    <alternativeName>
        <fullName>GrinchGEF</fullName>
    </alternativeName>
</protein>
<evidence type="ECO:0000250" key="1"/>
<evidence type="ECO:0000250" key="2">
    <source>
        <dbReference type="UniProtKB" id="A2AWP8"/>
    </source>
</evidence>
<evidence type="ECO:0000250" key="3">
    <source>
        <dbReference type="UniProtKB" id="Q9HCE6"/>
    </source>
</evidence>
<evidence type="ECO:0000255" key="4">
    <source>
        <dbReference type="PROSITE-ProRule" id="PRU00062"/>
    </source>
</evidence>
<evidence type="ECO:0000256" key="5">
    <source>
        <dbReference type="SAM" id="MobiDB-lite"/>
    </source>
</evidence>
<keyword id="KW-0963">Cytoplasm</keyword>
<keyword id="KW-0344">Guanine-nucleotide releasing factor</keyword>
<keyword id="KW-0597">Phosphoprotein</keyword>
<keyword id="KW-1185">Reference proteome</keyword>
<name>ARGAL_BOVIN</name>
<accession>Q29RM4</accession>
<dbReference type="EMBL" id="BC114112">
    <property type="protein sequence ID" value="AAI14113.1"/>
    <property type="molecule type" value="mRNA"/>
</dbReference>
<dbReference type="RefSeq" id="NP_001039762.1">
    <property type="nucleotide sequence ID" value="NM_001046297.1"/>
</dbReference>
<dbReference type="SMR" id="Q29RM4"/>
<dbReference type="FunCoup" id="Q29RM4">
    <property type="interactions" value="99"/>
</dbReference>
<dbReference type="STRING" id="9913.ENSBTAP00000066274"/>
<dbReference type="PaxDb" id="9913-ENSBTAP00000000909"/>
<dbReference type="GeneID" id="529043"/>
<dbReference type="KEGG" id="bta:529043"/>
<dbReference type="CTD" id="55160"/>
<dbReference type="eggNOG" id="KOG3522">
    <property type="taxonomic scope" value="Eukaryota"/>
</dbReference>
<dbReference type="InParanoid" id="Q29RM4"/>
<dbReference type="OrthoDB" id="28697at2759"/>
<dbReference type="Proteomes" id="UP000009136">
    <property type="component" value="Unplaced"/>
</dbReference>
<dbReference type="GO" id="GO:0005737">
    <property type="term" value="C:cytoplasm"/>
    <property type="evidence" value="ECO:0000318"/>
    <property type="project" value="GO_Central"/>
</dbReference>
<dbReference type="GO" id="GO:0005829">
    <property type="term" value="C:cytosol"/>
    <property type="evidence" value="ECO:0000318"/>
    <property type="project" value="GO_Central"/>
</dbReference>
<dbReference type="GO" id="GO:0005085">
    <property type="term" value="F:guanyl-nucleotide exchange factor activity"/>
    <property type="evidence" value="ECO:0000318"/>
    <property type="project" value="GO_Central"/>
</dbReference>
<dbReference type="GO" id="GO:0030036">
    <property type="term" value="P:actin cytoskeleton organization"/>
    <property type="evidence" value="ECO:0000318"/>
    <property type="project" value="GO_Central"/>
</dbReference>
<dbReference type="GO" id="GO:0051496">
    <property type="term" value="P:positive regulation of stress fiber assembly"/>
    <property type="evidence" value="ECO:0000318"/>
    <property type="project" value="GO_Central"/>
</dbReference>
<dbReference type="GO" id="GO:0032933">
    <property type="term" value="P:SREBP signaling pathway"/>
    <property type="evidence" value="ECO:0000318"/>
    <property type="project" value="GO_Central"/>
</dbReference>
<dbReference type="CDD" id="cd00160">
    <property type="entry name" value="RhoGEF"/>
    <property type="match status" value="1"/>
</dbReference>
<dbReference type="FunFam" id="2.30.29.30:FF:000200">
    <property type="entry name" value="Rho guanine nucleotide exchange factor (GEF) 10-like a"/>
    <property type="match status" value="1"/>
</dbReference>
<dbReference type="FunFam" id="1.20.900.10:FF:000003">
    <property type="entry name" value="Rho guanine nucleotide exchange factor 10 like"/>
    <property type="match status" value="1"/>
</dbReference>
<dbReference type="FunFam" id="2.130.10.10:FF:000405">
    <property type="entry name" value="rho guanine nucleotide exchange factor 10-like protein isoform X1"/>
    <property type="match status" value="1"/>
</dbReference>
<dbReference type="Gene3D" id="1.20.900.10">
    <property type="entry name" value="Dbl homology (DH) domain"/>
    <property type="match status" value="1"/>
</dbReference>
<dbReference type="Gene3D" id="2.30.29.30">
    <property type="entry name" value="Pleckstrin-homology domain (PH domain)/Phosphotyrosine-binding domain (PTB)"/>
    <property type="match status" value="1"/>
</dbReference>
<dbReference type="Gene3D" id="2.130.10.10">
    <property type="entry name" value="YVTN repeat-like/Quinoprotein amine dehydrogenase"/>
    <property type="match status" value="1"/>
</dbReference>
<dbReference type="InterPro" id="IPR039919">
    <property type="entry name" value="ARHGEF10/ARHGEF17"/>
</dbReference>
<dbReference type="InterPro" id="IPR035899">
    <property type="entry name" value="DBL_dom_sf"/>
</dbReference>
<dbReference type="InterPro" id="IPR000219">
    <property type="entry name" value="DH_dom"/>
</dbReference>
<dbReference type="InterPro" id="IPR011993">
    <property type="entry name" value="PH-like_dom_sf"/>
</dbReference>
<dbReference type="InterPro" id="IPR015943">
    <property type="entry name" value="WD40/YVTN_repeat-like_dom_sf"/>
</dbReference>
<dbReference type="InterPro" id="IPR036322">
    <property type="entry name" value="WD40_repeat_dom_sf"/>
</dbReference>
<dbReference type="PANTHER" id="PTHR12877">
    <property type="entry name" value="RHO GUANINE NUCLEOTIDE EXCHANGE FACTOR"/>
    <property type="match status" value="1"/>
</dbReference>
<dbReference type="PANTHER" id="PTHR12877:SF16">
    <property type="entry name" value="RHO GUANINE NUCLEOTIDE EXCHANGE FACTOR 10-LIKE PROTEIN"/>
    <property type="match status" value="1"/>
</dbReference>
<dbReference type="Pfam" id="PF19057">
    <property type="entry name" value="PH_19"/>
    <property type="match status" value="1"/>
</dbReference>
<dbReference type="Pfam" id="PF00621">
    <property type="entry name" value="RhoGEF"/>
    <property type="match status" value="1"/>
</dbReference>
<dbReference type="Pfam" id="PF19056">
    <property type="entry name" value="WD40_2"/>
    <property type="match status" value="1"/>
</dbReference>
<dbReference type="SMART" id="SM00325">
    <property type="entry name" value="RhoGEF"/>
    <property type="match status" value="1"/>
</dbReference>
<dbReference type="SUPFAM" id="SSF48065">
    <property type="entry name" value="DBL homology domain (DH-domain)"/>
    <property type="match status" value="1"/>
</dbReference>
<dbReference type="SUPFAM" id="SSF50729">
    <property type="entry name" value="PH domain-like"/>
    <property type="match status" value="1"/>
</dbReference>
<dbReference type="SUPFAM" id="SSF50978">
    <property type="entry name" value="WD40 repeat-like"/>
    <property type="match status" value="1"/>
</dbReference>
<dbReference type="PROSITE" id="PS50010">
    <property type="entry name" value="DH_2"/>
    <property type="match status" value="1"/>
</dbReference>